<comment type="subcellular location">
    <subcellularLocation>
        <location evidence="3">Membrane</location>
        <topology evidence="3">Single-pass membrane protein</topology>
    </subcellularLocation>
</comment>
<accession>O55715</accession>
<evidence type="ECO:0000255" key="1"/>
<evidence type="ECO:0000256" key="2">
    <source>
        <dbReference type="SAM" id="MobiDB-lite"/>
    </source>
</evidence>
<evidence type="ECO:0000305" key="3"/>
<sequence>MAKVIKINLIVNKRMSPAIILIGVLILIVLFVIKFNSSEVSSILTSEVTSEGDDEHETETRETTGCISQLNTLRATLAAKKKELKTLRTARKKECTEQLAKTQAEVDRIQAKIDNFSSRTKIVPLPGGEVGPPYNPPPPRTNTRPNPRPNPRPAQLPQLYNYGYY</sequence>
<keyword id="KW-0175">Coiled coil</keyword>
<keyword id="KW-0472">Membrane</keyword>
<keyword id="KW-1185">Reference proteome</keyword>
<keyword id="KW-0812">Transmembrane</keyword>
<keyword id="KW-1133">Transmembrane helix</keyword>
<dbReference type="EMBL" id="AF303741">
    <property type="protein sequence ID" value="AAB94426.1"/>
    <property type="molecule type" value="Genomic_DNA"/>
</dbReference>
<dbReference type="PIR" id="T03052">
    <property type="entry name" value="T03052"/>
</dbReference>
<dbReference type="RefSeq" id="NP_149547.1">
    <property type="nucleotide sequence ID" value="NC_003038.1"/>
</dbReference>
<dbReference type="SMR" id="O55715"/>
<dbReference type="KEGG" id="vg:1733338"/>
<dbReference type="Proteomes" id="UP000001359">
    <property type="component" value="Genome"/>
</dbReference>
<dbReference type="GO" id="GO:0016020">
    <property type="term" value="C:membrane"/>
    <property type="evidence" value="ECO:0007669"/>
    <property type="project" value="UniProtKB-SubCell"/>
</dbReference>
<reference key="1">
    <citation type="journal article" date="2001" name="Virology">
        <title>Analysis of the first complete DNA sequence of an invertebrate iridovirus: coding strategy of the genome of Chilo iridescent virus.</title>
        <authorList>
            <person name="Jakob N.J."/>
            <person name="Mueller K."/>
            <person name="Bahr U."/>
            <person name="Darai G."/>
        </authorList>
    </citation>
    <scope>NUCLEOTIDE SEQUENCE [LARGE SCALE GENOMIC DNA]</scope>
</reference>
<reference key="2">
    <citation type="journal article" date="2007" name="Virol. J.">
        <title>Comparative genomic analysis of the family Iridoviridae: re-annotating and defining the core set of iridovirus genes.</title>
        <authorList>
            <person name="Eaton H.E."/>
            <person name="Metcalf J."/>
            <person name="Penny E."/>
            <person name="Tcherepanov V."/>
            <person name="Upton C."/>
            <person name="Brunetti C.R."/>
        </authorList>
    </citation>
    <scope>GENOME REANNOTATION</scope>
</reference>
<organismHost>
    <name type="scientific">Acheta domesticus</name>
    <name type="common">House cricket</name>
    <dbReference type="NCBI Taxonomy" id="6997"/>
</organismHost>
<organismHost>
    <name type="scientific">Chilo suppressalis</name>
    <name type="common">Asiatic rice borer moth</name>
    <dbReference type="NCBI Taxonomy" id="168631"/>
</organismHost>
<organismHost>
    <name type="scientific">Gryllus bimaculatus</name>
    <name type="common">Two-spotted cricket</name>
    <dbReference type="NCBI Taxonomy" id="6999"/>
</organismHost>
<organismHost>
    <name type="scientific">Gryllus campestris</name>
    <dbReference type="NCBI Taxonomy" id="58607"/>
</organismHost>
<organismHost>
    <name type="scientific">Spodoptera frugiperda</name>
    <name type="common">Fall armyworm</name>
    <dbReference type="NCBI Taxonomy" id="7108"/>
</organismHost>
<name>084L_IIV6</name>
<gene>
    <name type="ORF">IIV6-084L</name>
</gene>
<protein>
    <recommendedName>
        <fullName>Uncharacterized protein 084L</fullName>
    </recommendedName>
</protein>
<proteinExistence type="predicted"/>
<feature type="chain" id="PRO_0000377983" description="Uncharacterized protein 084L">
    <location>
        <begin position="1"/>
        <end position="165"/>
    </location>
</feature>
<feature type="transmembrane region" description="Helical" evidence="1">
    <location>
        <begin position="15"/>
        <end position="35"/>
    </location>
</feature>
<feature type="region of interest" description="Disordered" evidence="2">
    <location>
        <begin position="123"/>
        <end position="156"/>
    </location>
</feature>
<feature type="coiled-coil region" evidence="1">
    <location>
        <begin position="67"/>
        <end position="119"/>
    </location>
</feature>
<feature type="compositionally biased region" description="Pro residues" evidence="2">
    <location>
        <begin position="133"/>
        <end position="154"/>
    </location>
</feature>
<organism>
    <name type="scientific">Invertebrate iridescent virus 6</name>
    <name type="common">IIV-6</name>
    <name type="synonym">Chilo iridescent virus</name>
    <dbReference type="NCBI Taxonomy" id="176652"/>
    <lineage>
        <taxon>Viruses</taxon>
        <taxon>Varidnaviria</taxon>
        <taxon>Bamfordvirae</taxon>
        <taxon>Nucleocytoviricota</taxon>
        <taxon>Megaviricetes</taxon>
        <taxon>Pimascovirales</taxon>
        <taxon>Iridoviridae</taxon>
        <taxon>Betairidovirinae</taxon>
        <taxon>Iridovirus</taxon>
    </lineage>
</organism>